<keyword id="KW-0007">Acetylation</keyword>
<keyword id="KW-1003">Cell membrane</keyword>
<keyword id="KW-0449">Lipoprotein</keyword>
<keyword id="KW-0472">Membrane</keyword>
<keyword id="KW-0488">Methylation</keyword>
<keyword id="KW-0636">Prenylation</keyword>
<keyword id="KW-1185">Reference proteome</keyword>
<keyword id="KW-0807">Transducer</keyword>
<name>GBG7_RAT</name>
<protein>
    <recommendedName>
        <fullName>Guanine nucleotide-binding protein G(I)/G(S)/G(O) subunit gamma-7</fullName>
    </recommendedName>
</protein>
<accession>P43425</accession>
<accession>Q45QK4</accession>
<comment type="function">
    <text evidence="1">Guanine nucleotide-binding proteins (G proteins) are involved as a modulator or transducer in various transmembrane signaling systems. The beta and gamma chains are required for the GTPase activity, for replacement of GDP by GTP, and for G protein-effector interaction. Plays a role in the regulation of adenylyl cyclase signaling in certain regions of the brain. Plays a role in the formation or stabilization of a G protein heterotrimer (G(olf) subunit alpha-beta-gamma-7) that is required for adenylyl cyclase activity in the striatum (By similarity).</text>
</comment>
<comment type="subunit">
    <text>G proteins are composed of 3 units, alpha, beta and gamma.</text>
</comment>
<comment type="subcellular location">
    <subcellularLocation>
        <location evidence="3">Cell membrane</location>
        <topology evidence="3">Lipid-anchor</topology>
        <orientation evidence="3">Cytoplasmic side</orientation>
    </subcellularLocation>
</comment>
<comment type="tissue specificity">
    <text>Expressed in a variety of tissues.</text>
</comment>
<comment type="similarity">
    <text evidence="3">Belongs to the G protein gamma family.</text>
</comment>
<comment type="sequence caution" evidence="3">
    <conflict type="erroneous initiation">
        <sequence resource="EMBL-CDS" id="AAA65640"/>
    </conflict>
</comment>
<proteinExistence type="evidence at transcript level"/>
<feature type="initiator methionine" description="Removed" evidence="2">
    <location>
        <position position="1"/>
    </location>
</feature>
<feature type="chain" id="PRO_0000012639" description="Guanine nucleotide-binding protein G(I)/G(S)/G(O) subunit gamma-7">
    <location>
        <begin position="2"/>
        <end position="65"/>
    </location>
</feature>
<feature type="propeptide" id="PRO_0000012640" description="Removed in mature form" evidence="1">
    <location>
        <begin position="66"/>
        <end position="68"/>
    </location>
</feature>
<feature type="modified residue" description="N-acetylserine" evidence="2">
    <location>
        <position position="2"/>
    </location>
</feature>
<feature type="modified residue" description="Cysteine methyl ester" evidence="1">
    <location>
        <position position="65"/>
    </location>
</feature>
<feature type="lipid moiety-binding region" description="S-geranylgeranyl cysteine" evidence="1">
    <location>
        <position position="65"/>
    </location>
</feature>
<gene>
    <name type="primary">Gng7</name>
    <name type="synonym">Gngt7</name>
</gene>
<sequence>MSGTNNVAQARKLVEQLRIEAGIERIKVSKASSELMSYCEQHARNDPLLVGVPASENPFKDKKPCIIL</sequence>
<organism>
    <name type="scientific">Rattus norvegicus</name>
    <name type="common">Rat</name>
    <dbReference type="NCBI Taxonomy" id="10116"/>
    <lineage>
        <taxon>Eukaryota</taxon>
        <taxon>Metazoa</taxon>
        <taxon>Chordata</taxon>
        <taxon>Craniata</taxon>
        <taxon>Vertebrata</taxon>
        <taxon>Euteleostomi</taxon>
        <taxon>Mammalia</taxon>
        <taxon>Eutheria</taxon>
        <taxon>Euarchontoglires</taxon>
        <taxon>Glires</taxon>
        <taxon>Rodentia</taxon>
        <taxon>Myomorpha</taxon>
        <taxon>Muroidea</taxon>
        <taxon>Muridae</taxon>
        <taxon>Murinae</taxon>
        <taxon>Rattus</taxon>
    </lineage>
</organism>
<dbReference type="EMBL" id="L23219">
    <property type="protein sequence ID" value="AAA65640.1"/>
    <property type="status" value="ALT_INIT"/>
    <property type="molecule type" value="mRNA"/>
</dbReference>
<dbReference type="EMBL" id="DQ120497">
    <property type="protein sequence ID" value="AAZ23836.1"/>
    <property type="molecule type" value="mRNA"/>
</dbReference>
<dbReference type="EMBL" id="DQ120498">
    <property type="protein sequence ID" value="AAZ23837.1"/>
    <property type="molecule type" value="mRNA"/>
</dbReference>
<dbReference type="PIR" id="I56580">
    <property type="entry name" value="I56580"/>
</dbReference>
<dbReference type="RefSeq" id="NP_077052.1">
    <property type="nucleotide sequence ID" value="NM_024138.1"/>
</dbReference>
<dbReference type="RefSeq" id="XP_017450559.1">
    <property type="nucleotide sequence ID" value="XM_017595070.1"/>
</dbReference>
<dbReference type="RefSeq" id="XP_017450560.1">
    <property type="nucleotide sequence ID" value="XM_017595071.1"/>
</dbReference>
<dbReference type="SMR" id="P43425"/>
<dbReference type="BioGRID" id="248710">
    <property type="interactions" value="2"/>
</dbReference>
<dbReference type="FunCoup" id="P43425">
    <property type="interactions" value="1936"/>
</dbReference>
<dbReference type="IntAct" id="P43425">
    <property type="interactions" value="1"/>
</dbReference>
<dbReference type="MINT" id="P43425"/>
<dbReference type="STRING" id="10116.ENSRNOP00000026893"/>
<dbReference type="PhosphoSitePlus" id="P43425"/>
<dbReference type="jPOST" id="P43425"/>
<dbReference type="PaxDb" id="10116-ENSRNOP00000026893"/>
<dbReference type="GeneID" id="58979"/>
<dbReference type="KEGG" id="rno:58979"/>
<dbReference type="UCSC" id="RGD:61860">
    <property type="organism name" value="rat"/>
</dbReference>
<dbReference type="AGR" id="RGD:61860"/>
<dbReference type="CTD" id="2788"/>
<dbReference type="RGD" id="61860">
    <property type="gene designation" value="Gng7"/>
</dbReference>
<dbReference type="eggNOG" id="KOG4119">
    <property type="taxonomic scope" value="Eukaryota"/>
</dbReference>
<dbReference type="InParanoid" id="P43425"/>
<dbReference type="OrthoDB" id="20302at9989"/>
<dbReference type="PhylomeDB" id="P43425"/>
<dbReference type="TreeFam" id="TF319909"/>
<dbReference type="Reactome" id="R-RNO-1296041">
    <property type="pathway name" value="Activation of G protein gated Potassium channels"/>
</dbReference>
<dbReference type="Reactome" id="R-RNO-202040">
    <property type="pathway name" value="G-protein activation"/>
</dbReference>
<dbReference type="Reactome" id="R-RNO-381676">
    <property type="pathway name" value="Glucagon-like Peptide-1 (GLP1) regulates insulin secretion"/>
</dbReference>
<dbReference type="Reactome" id="R-RNO-392170">
    <property type="pathway name" value="ADP signalling through P2Y purinoceptor 12"/>
</dbReference>
<dbReference type="Reactome" id="R-RNO-392451">
    <property type="pathway name" value="G beta:gamma signalling through PI3Kgamma"/>
</dbReference>
<dbReference type="Reactome" id="R-RNO-400042">
    <property type="pathway name" value="Adrenaline,noradrenaline inhibits insulin secretion"/>
</dbReference>
<dbReference type="Reactome" id="R-RNO-4086398">
    <property type="pathway name" value="Ca2+ pathway"/>
</dbReference>
<dbReference type="Reactome" id="R-RNO-416476">
    <property type="pathway name" value="G alpha (q) signalling events"/>
</dbReference>
<dbReference type="Reactome" id="R-RNO-418594">
    <property type="pathway name" value="G alpha (i) signalling events"/>
</dbReference>
<dbReference type="Reactome" id="R-RNO-418597">
    <property type="pathway name" value="G alpha (z) signalling events"/>
</dbReference>
<dbReference type="Reactome" id="R-RNO-420092">
    <property type="pathway name" value="Glucagon-type ligand receptors"/>
</dbReference>
<dbReference type="Reactome" id="R-RNO-428930">
    <property type="pathway name" value="Thromboxane signalling through TP receptor"/>
</dbReference>
<dbReference type="Reactome" id="R-RNO-432040">
    <property type="pathway name" value="Vasopressin regulates renal water homeostasis via Aquaporins"/>
</dbReference>
<dbReference type="Reactome" id="R-RNO-456926">
    <property type="pathway name" value="Thrombin signalling through proteinase activated receptors (PARs)"/>
</dbReference>
<dbReference type="Reactome" id="R-RNO-8964616">
    <property type="pathway name" value="G beta:gamma signalling through CDC42"/>
</dbReference>
<dbReference type="Reactome" id="R-RNO-9856530">
    <property type="pathway name" value="High laminar flow shear stress activates signaling by PIEZO1 and PECAM1:CDH5:KDR in endothelial cells"/>
</dbReference>
<dbReference type="Reactome" id="R-RNO-997272">
    <property type="pathway name" value="Inhibition of voltage gated Ca2+ channels via Gbeta/gamma subunits"/>
</dbReference>
<dbReference type="PRO" id="PR:P43425"/>
<dbReference type="Proteomes" id="UP000002494">
    <property type="component" value="Unplaced"/>
</dbReference>
<dbReference type="GO" id="GO:0005834">
    <property type="term" value="C:heterotrimeric G-protein complex"/>
    <property type="evidence" value="ECO:0000318"/>
    <property type="project" value="GO_Central"/>
</dbReference>
<dbReference type="GO" id="GO:0098688">
    <property type="term" value="C:parallel fiber to Purkinje cell synapse"/>
    <property type="evidence" value="ECO:0000314"/>
    <property type="project" value="SynGO"/>
</dbReference>
<dbReference type="GO" id="GO:0098685">
    <property type="term" value="C:Schaffer collateral - CA1 synapse"/>
    <property type="evidence" value="ECO:0000314"/>
    <property type="project" value="SynGO"/>
</dbReference>
<dbReference type="GO" id="GO:0045202">
    <property type="term" value="C:synapse"/>
    <property type="evidence" value="ECO:0000266"/>
    <property type="project" value="RGD"/>
</dbReference>
<dbReference type="GO" id="GO:0030672">
    <property type="term" value="C:synaptic vesicle membrane"/>
    <property type="evidence" value="ECO:0000314"/>
    <property type="project" value="SynGO"/>
</dbReference>
<dbReference type="GO" id="GO:0031681">
    <property type="term" value="F:G-protein beta-subunit binding"/>
    <property type="evidence" value="ECO:0000318"/>
    <property type="project" value="GO_Central"/>
</dbReference>
<dbReference type="GO" id="GO:0001662">
    <property type="term" value="P:behavioral fear response"/>
    <property type="evidence" value="ECO:0000266"/>
    <property type="project" value="RGD"/>
</dbReference>
<dbReference type="GO" id="GO:0007186">
    <property type="term" value="P:G protein-coupled receptor signaling pathway"/>
    <property type="evidence" value="ECO:0000318"/>
    <property type="project" value="GO_Central"/>
</dbReference>
<dbReference type="GO" id="GO:0007626">
    <property type="term" value="P:locomotory behavior"/>
    <property type="evidence" value="ECO:0000266"/>
    <property type="project" value="RGD"/>
</dbReference>
<dbReference type="GO" id="GO:0007168">
    <property type="term" value="P:receptor guanylyl cyclase signaling pathway"/>
    <property type="evidence" value="ECO:0000266"/>
    <property type="project" value="RGD"/>
</dbReference>
<dbReference type="CDD" id="cd00068">
    <property type="entry name" value="GGL"/>
    <property type="match status" value="1"/>
</dbReference>
<dbReference type="FunFam" id="4.10.260.10:FF:000001">
    <property type="entry name" value="Guanine nucleotide-binding protein subunit gamma"/>
    <property type="match status" value="1"/>
</dbReference>
<dbReference type="Gene3D" id="4.10.260.10">
    <property type="entry name" value="Transducin (heterotrimeric G protein), gamma chain"/>
    <property type="match status" value="1"/>
</dbReference>
<dbReference type="InterPro" id="IPR015898">
    <property type="entry name" value="G-protein_gamma-like_dom"/>
</dbReference>
<dbReference type="InterPro" id="IPR036284">
    <property type="entry name" value="GGL_sf"/>
</dbReference>
<dbReference type="InterPro" id="IPR001770">
    <property type="entry name" value="Gprotein-gamma"/>
</dbReference>
<dbReference type="PANTHER" id="PTHR13809">
    <property type="entry name" value="GUANINE NUCLEOTIDE-BINDING PROTEIN GAMMA SUBUNIT"/>
    <property type="match status" value="1"/>
</dbReference>
<dbReference type="Pfam" id="PF00631">
    <property type="entry name" value="G-gamma"/>
    <property type="match status" value="1"/>
</dbReference>
<dbReference type="PRINTS" id="PR00321">
    <property type="entry name" value="GPROTEING"/>
</dbReference>
<dbReference type="SMART" id="SM01224">
    <property type="entry name" value="G_gamma"/>
    <property type="match status" value="1"/>
</dbReference>
<dbReference type="SMART" id="SM00224">
    <property type="entry name" value="GGL"/>
    <property type="match status" value="1"/>
</dbReference>
<dbReference type="SUPFAM" id="SSF48670">
    <property type="entry name" value="Transducin (heterotrimeric G protein), gamma chain"/>
    <property type="match status" value="1"/>
</dbReference>
<dbReference type="PROSITE" id="PS50058">
    <property type="entry name" value="G_PROTEIN_GAMMA"/>
    <property type="match status" value="1"/>
</dbReference>
<evidence type="ECO:0000250" key="1"/>
<evidence type="ECO:0000250" key="2">
    <source>
        <dbReference type="UniProtKB" id="O60262"/>
    </source>
</evidence>
<evidence type="ECO:0000305" key="3"/>
<reference key="1">
    <citation type="journal article" date="1994" name="J. Neurosci. Res.">
        <title>G-protein gamma 7 subunit is selectively expressed in medium-sized neurons and dendrites of the rat neostriatum.</title>
        <authorList>
            <person name="Watson J.B."/>
            <person name="Coulter P.M. II"/>
            <person name="Margulies J.E."/>
            <person name="de Lecea L."/>
            <person name="Danielson P.E."/>
            <person name="Erlander M.G."/>
            <person name="Sutcliffe J.G."/>
        </authorList>
    </citation>
    <scope>NUCLEOTIDE SEQUENCE [MRNA]</scope>
</reference>
<reference key="2">
    <citation type="submission" date="2005-07" db="EMBL/GenBank/DDBJ databases">
        <title>Genetic similarity between spontaneously hypertensive rats and Wistar-Kyoto rats in the coding regions of signal transduction proteins.</title>
        <authorList>
            <person name="Jackson E.K."/>
            <person name="Zhu C."/>
        </authorList>
    </citation>
    <scope>NUCLEOTIDE SEQUENCE [MRNA]</scope>
    <source>
        <strain>SHR</strain>
        <strain>Wistar Kyoto</strain>
    </source>
</reference>